<comment type="function">
    <text evidence="1">Catalyzes the attachment of alanine to tRNA(Ala) in a two-step reaction: alanine is first activated by ATP to form Ala-AMP and then transferred to the acceptor end of tRNA(Ala). Also edits incorrectly charged Ser-tRNA(Ala) and Gly-tRNA(Ala) via its editing domain.</text>
</comment>
<comment type="catalytic activity">
    <reaction evidence="1">
        <text>tRNA(Ala) + L-alanine + ATP = L-alanyl-tRNA(Ala) + AMP + diphosphate</text>
        <dbReference type="Rhea" id="RHEA:12540"/>
        <dbReference type="Rhea" id="RHEA-COMP:9657"/>
        <dbReference type="Rhea" id="RHEA-COMP:9923"/>
        <dbReference type="ChEBI" id="CHEBI:30616"/>
        <dbReference type="ChEBI" id="CHEBI:33019"/>
        <dbReference type="ChEBI" id="CHEBI:57972"/>
        <dbReference type="ChEBI" id="CHEBI:78442"/>
        <dbReference type="ChEBI" id="CHEBI:78497"/>
        <dbReference type="ChEBI" id="CHEBI:456215"/>
        <dbReference type="EC" id="6.1.1.7"/>
    </reaction>
</comment>
<comment type="cofactor">
    <cofactor evidence="1">
        <name>Zn(2+)</name>
        <dbReference type="ChEBI" id="CHEBI:29105"/>
    </cofactor>
    <text evidence="1">Binds 1 zinc ion per subunit.</text>
</comment>
<comment type="subcellular location">
    <subcellularLocation>
        <location evidence="1">Cytoplasm</location>
    </subcellularLocation>
</comment>
<comment type="domain">
    <text evidence="1">Consists of three domains; the N-terminal catalytic domain, the editing domain and the C-terminal C-Ala domain. The editing domain removes incorrectly charged amino acids, while the C-Ala domain, along with tRNA(Ala), serves as a bridge to cooperatively bring together the editing and aminoacylation centers thus stimulating deacylation of misacylated tRNAs.</text>
</comment>
<comment type="similarity">
    <text evidence="1">Belongs to the class-II aminoacyl-tRNA synthetase family.</text>
</comment>
<feature type="chain" id="PRO_0000347628" description="Alanine--tRNA ligase">
    <location>
        <begin position="1"/>
        <end position="874"/>
    </location>
</feature>
<feature type="binding site" evidence="1">
    <location>
        <position position="563"/>
    </location>
    <ligand>
        <name>Zn(2+)</name>
        <dbReference type="ChEBI" id="CHEBI:29105"/>
    </ligand>
</feature>
<feature type="binding site" evidence="1">
    <location>
        <position position="567"/>
    </location>
    <ligand>
        <name>Zn(2+)</name>
        <dbReference type="ChEBI" id="CHEBI:29105"/>
    </ligand>
</feature>
<feature type="binding site" evidence="1">
    <location>
        <position position="665"/>
    </location>
    <ligand>
        <name>Zn(2+)</name>
        <dbReference type="ChEBI" id="CHEBI:29105"/>
    </ligand>
</feature>
<feature type="binding site" evidence="1">
    <location>
        <position position="669"/>
    </location>
    <ligand>
        <name>Zn(2+)</name>
        <dbReference type="ChEBI" id="CHEBI:29105"/>
    </ligand>
</feature>
<organism>
    <name type="scientific">Histophilus somni (strain 2336)</name>
    <name type="common">Haemophilus somnus</name>
    <dbReference type="NCBI Taxonomy" id="228400"/>
    <lineage>
        <taxon>Bacteria</taxon>
        <taxon>Pseudomonadati</taxon>
        <taxon>Pseudomonadota</taxon>
        <taxon>Gammaproteobacteria</taxon>
        <taxon>Pasteurellales</taxon>
        <taxon>Pasteurellaceae</taxon>
        <taxon>Histophilus</taxon>
    </lineage>
</organism>
<name>SYA_HISS2</name>
<protein>
    <recommendedName>
        <fullName evidence="1">Alanine--tRNA ligase</fullName>
        <ecNumber evidence="1">6.1.1.7</ecNumber>
    </recommendedName>
    <alternativeName>
        <fullName evidence="1">Alanyl-tRNA synthetase</fullName>
        <shortName evidence="1">AlaRS</shortName>
    </alternativeName>
</protein>
<proteinExistence type="inferred from homology"/>
<sequence length="874" mass="96504">MKTTAEIRQAFLDFFHSKGHQIVDSSSLVPENDPTLLFTNAGMNQFKDVFLGLDTRSYTRATTAQRCVRAGGKHNDLENVGYTARHHTFFEMLGNFSFGDYFKQDAIKFAWEFLTSPEWLGLPEEKLYVTVYETDDEAYGIWHKGVGVPENHIIRIGDNKGAPYASDNFWAMGDTGPCGPCTEIFYDHGEHVWGGLPGSEEEDGDRYIEVWNIVFMQFNRLADGTMEKLPKPSVDTGMGLERISAVIQHVNSNYDIDIFQKLIAKVAELTGEKDLTNKSLRVIADHIRSCAYLIVDGVIPSNEGRGYVLRRIIRRAVRHGHLLGAKDTFFYKLVPVLIDVMATAGKDVKAKQANVEKLLRLEEEQFARTLERGLALLDEALINVKDGVLSGEVAFKLYDTYGFPLDLTADVCRERNIRIDEEGFEREMEVQRLRAQAASRFGVDYNNVIRVEGTTTFEGYTEAETQAKVTALFYEGKSVESISAGQSAVVILDDTPFYAESGGQIGDRGCLIATNMRFDVKDTQKYGQVFGHIGTLIQGTLNVGQTINAVVDTEHRIKTSLNHSATHLLHAALRQVLGSHVAQKGSLVSDTILRFDFAQPEAISQEQLFEIECLVNQHIRANHLVVTEVMPIDEAKAKGAMALFGEKYGDVVRVVKMGEFSIELCGGIHVKRTGEIGLFKIVSGSAIAAGVRRVEAVTGEGAINWLQQQQVLLMQSADLLKSDANSLVEKIQQLQDKAKKTEKELQALKEKSAMKAGSDIAKSAVEINGVSVIVQQLENMDVKSLRVIVDDLKNQLGSAVIAFVTKNEDKVNLVVGVTTDLTSKVKAGELVNLMAQQVGGKGGGRPDMAMAGGSQPENISKALTVCNEWLHKNL</sequence>
<accession>B0UTE1</accession>
<dbReference type="EC" id="6.1.1.7" evidence="1"/>
<dbReference type="EMBL" id="CP000947">
    <property type="protein sequence ID" value="ACA30775.1"/>
    <property type="molecule type" value="Genomic_DNA"/>
</dbReference>
<dbReference type="RefSeq" id="WP_012340248.1">
    <property type="nucleotide sequence ID" value="NC_010519.1"/>
</dbReference>
<dbReference type="SMR" id="B0UTE1"/>
<dbReference type="STRING" id="228400.HSM_1060"/>
<dbReference type="GeneID" id="31487360"/>
<dbReference type="KEGG" id="hsm:HSM_1060"/>
<dbReference type="HOGENOM" id="CLU_004485_1_1_6"/>
<dbReference type="GO" id="GO:0005829">
    <property type="term" value="C:cytosol"/>
    <property type="evidence" value="ECO:0007669"/>
    <property type="project" value="TreeGrafter"/>
</dbReference>
<dbReference type="GO" id="GO:0004813">
    <property type="term" value="F:alanine-tRNA ligase activity"/>
    <property type="evidence" value="ECO:0007669"/>
    <property type="project" value="UniProtKB-UniRule"/>
</dbReference>
<dbReference type="GO" id="GO:0002161">
    <property type="term" value="F:aminoacyl-tRNA deacylase activity"/>
    <property type="evidence" value="ECO:0007669"/>
    <property type="project" value="TreeGrafter"/>
</dbReference>
<dbReference type="GO" id="GO:0005524">
    <property type="term" value="F:ATP binding"/>
    <property type="evidence" value="ECO:0007669"/>
    <property type="project" value="UniProtKB-UniRule"/>
</dbReference>
<dbReference type="GO" id="GO:0000049">
    <property type="term" value="F:tRNA binding"/>
    <property type="evidence" value="ECO:0007669"/>
    <property type="project" value="UniProtKB-KW"/>
</dbReference>
<dbReference type="GO" id="GO:0008270">
    <property type="term" value="F:zinc ion binding"/>
    <property type="evidence" value="ECO:0007669"/>
    <property type="project" value="UniProtKB-UniRule"/>
</dbReference>
<dbReference type="GO" id="GO:0006419">
    <property type="term" value="P:alanyl-tRNA aminoacylation"/>
    <property type="evidence" value="ECO:0007669"/>
    <property type="project" value="UniProtKB-UniRule"/>
</dbReference>
<dbReference type="GO" id="GO:0045892">
    <property type="term" value="P:negative regulation of DNA-templated transcription"/>
    <property type="evidence" value="ECO:0007669"/>
    <property type="project" value="TreeGrafter"/>
</dbReference>
<dbReference type="CDD" id="cd00673">
    <property type="entry name" value="AlaRS_core"/>
    <property type="match status" value="1"/>
</dbReference>
<dbReference type="FunFam" id="2.40.30.130:FF:000001">
    <property type="entry name" value="Alanine--tRNA ligase"/>
    <property type="match status" value="1"/>
</dbReference>
<dbReference type="FunFam" id="3.10.310.40:FF:000001">
    <property type="entry name" value="Alanine--tRNA ligase"/>
    <property type="match status" value="1"/>
</dbReference>
<dbReference type="FunFam" id="3.30.54.20:FF:000001">
    <property type="entry name" value="Alanine--tRNA ligase"/>
    <property type="match status" value="1"/>
</dbReference>
<dbReference type="FunFam" id="3.30.930.10:FF:000004">
    <property type="entry name" value="Alanine--tRNA ligase"/>
    <property type="match status" value="1"/>
</dbReference>
<dbReference type="FunFam" id="3.30.980.10:FF:000004">
    <property type="entry name" value="Alanine--tRNA ligase, cytoplasmic"/>
    <property type="match status" value="1"/>
</dbReference>
<dbReference type="Gene3D" id="2.40.30.130">
    <property type="match status" value="1"/>
</dbReference>
<dbReference type="Gene3D" id="3.10.310.40">
    <property type="match status" value="1"/>
</dbReference>
<dbReference type="Gene3D" id="3.30.54.20">
    <property type="match status" value="1"/>
</dbReference>
<dbReference type="Gene3D" id="6.10.250.550">
    <property type="match status" value="1"/>
</dbReference>
<dbReference type="Gene3D" id="3.30.930.10">
    <property type="entry name" value="Bira Bifunctional Protein, Domain 2"/>
    <property type="match status" value="1"/>
</dbReference>
<dbReference type="Gene3D" id="3.30.980.10">
    <property type="entry name" value="Threonyl-trna Synthetase, Chain A, domain 2"/>
    <property type="match status" value="1"/>
</dbReference>
<dbReference type="HAMAP" id="MF_00036_B">
    <property type="entry name" value="Ala_tRNA_synth_B"/>
    <property type="match status" value="1"/>
</dbReference>
<dbReference type="InterPro" id="IPR045864">
    <property type="entry name" value="aa-tRNA-synth_II/BPL/LPL"/>
</dbReference>
<dbReference type="InterPro" id="IPR002318">
    <property type="entry name" value="Ala-tRNA-lgiase_IIc"/>
</dbReference>
<dbReference type="InterPro" id="IPR018162">
    <property type="entry name" value="Ala-tRNA-ligase_IIc_anticod-bd"/>
</dbReference>
<dbReference type="InterPro" id="IPR018165">
    <property type="entry name" value="Ala-tRNA-synth_IIc_core"/>
</dbReference>
<dbReference type="InterPro" id="IPR018164">
    <property type="entry name" value="Ala-tRNA-synth_IIc_N"/>
</dbReference>
<dbReference type="InterPro" id="IPR050058">
    <property type="entry name" value="Ala-tRNA_ligase"/>
</dbReference>
<dbReference type="InterPro" id="IPR023033">
    <property type="entry name" value="Ala_tRNA_ligase_euk/bac"/>
</dbReference>
<dbReference type="InterPro" id="IPR003156">
    <property type="entry name" value="DHHA1_dom"/>
</dbReference>
<dbReference type="InterPro" id="IPR018163">
    <property type="entry name" value="Thr/Ala-tRNA-synth_IIc_edit"/>
</dbReference>
<dbReference type="InterPro" id="IPR009000">
    <property type="entry name" value="Transl_B-barrel_sf"/>
</dbReference>
<dbReference type="InterPro" id="IPR012947">
    <property type="entry name" value="tRNA_SAD"/>
</dbReference>
<dbReference type="NCBIfam" id="TIGR00344">
    <property type="entry name" value="alaS"/>
    <property type="match status" value="1"/>
</dbReference>
<dbReference type="PANTHER" id="PTHR11777:SF9">
    <property type="entry name" value="ALANINE--TRNA LIGASE, CYTOPLASMIC"/>
    <property type="match status" value="1"/>
</dbReference>
<dbReference type="PANTHER" id="PTHR11777">
    <property type="entry name" value="ALANYL-TRNA SYNTHETASE"/>
    <property type="match status" value="1"/>
</dbReference>
<dbReference type="Pfam" id="PF02272">
    <property type="entry name" value="DHHA1"/>
    <property type="match status" value="1"/>
</dbReference>
<dbReference type="Pfam" id="PF01411">
    <property type="entry name" value="tRNA-synt_2c"/>
    <property type="match status" value="1"/>
</dbReference>
<dbReference type="Pfam" id="PF07973">
    <property type="entry name" value="tRNA_SAD"/>
    <property type="match status" value="1"/>
</dbReference>
<dbReference type="PRINTS" id="PR00980">
    <property type="entry name" value="TRNASYNTHALA"/>
</dbReference>
<dbReference type="SMART" id="SM00863">
    <property type="entry name" value="tRNA_SAD"/>
    <property type="match status" value="1"/>
</dbReference>
<dbReference type="SUPFAM" id="SSF55681">
    <property type="entry name" value="Class II aaRS and biotin synthetases"/>
    <property type="match status" value="1"/>
</dbReference>
<dbReference type="SUPFAM" id="SSF101353">
    <property type="entry name" value="Putative anticodon-binding domain of alanyl-tRNA synthetase (AlaRS)"/>
    <property type="match status" value="1"/>
</dbReference>
<dbReference type="SUPFAM" id="SSF55186">
    <property type="entry name" value="ThrRS/AlaRS common domain"/>
    <property type="match status" value="1"/>
</dbReference>
<dbReference type="SUPFAM" id="SSF50447">
    <property type="entry name" value="Translation proteins"/>
    <property type="match status" value="1"/>
</dbReference>
<dbReference type="PROSITE" id="PS50860">
    <property type="entry name" value="AA_TRNA_LIGASE_II_ALA"/>
    <property type="match status" value="1"/>
</dbReference>
<evidence type="ECO:0000255" key="1">
    <source>
        <dbReference type="HAMAP-Rule" id="MF_00036"/>
    </source>
</evidence>
<keyword id="KW-0030">Aminoacyl-tRNA synthetase</keyword>
<keyword id="KW-0067">ATP-binding</keyword>
<keyword id="KW-0963">Cytoplasm</keyword>
<keyword id="KW-0436">Ligase</keyword>
<keyword id="KW-0479">Metal-binding</keyword>
<keyword id="KW-0547">Nucleotide-binding</keyword>
<keyword id="KW-0648">Protein biosynthesis</keyword>
<keyword id="KW-0694">RNA-binding</keyword>
<keyword id="KW-0820">tRNA-binding</keyword>
<keyword id="KW-0862">Zinc</keyword>
<reference key="1">
    <citation type="submission" date="2008-02" db="EMBL/GenBank/DDBJ databases">
        <title>Complete sequence of Haemophilus somnus 2336.</title>
        <authorList>
            <consortium name="US DOE Joint Genome Institute"/>
            <person name="Siddaramappa S."/>
            <person name="Duncan A.J."/>
            <person name="Challacombe J.F."/>
            <person name="Rainey D."/>
            <person name="Gillaspy A.F."/>
            <person name="Carson M."/>
            <person name="Gipson J."/>
            <person name="Gipson M."/>
            <person name="Bruce D."/>
            <person name="Detter J.C."/>
            <person name="Han C.S."/>
            <person name="Land M."/>
            <person name="Tapia R."/>
            <person name="Thompson L.S."/>
            <person name="Orvis J."/>
            <person name="Zaitshik J."/>
            <person name="Barnes G."/>
            <person name="Brettin T.S."/>
            <person name="Dyer D.W."/>
            <person name="Inzana T.J."/>
        </authorList>
    </citation>
    <scope>NUCLEOTIDE SEQUENCE [LARGE SCALE GENOMIC DNA]</scope>
    <source>
        <strain>2336</strain>
    </source>
</reference>
<gene>
    <name evidence="1" type="primary">alaS</name>
    <name type="ordered locus">HSM_1060</name>
</gene>